<evidence type="ECO:0000255" key="1">
    <source>
        <dbReference type="HAMAP-Rule" id="MF_01033"/>
    </source>
</evidence>
<name>LEU3_PROMT</name>
<feature type="chain" id="PRO_0000083724" description="3-isopropylmalate dehydrogenase">
    <location>
        <begin position="1"/>
        <end position="359"/>
    </location>
</feature>
<feature type="binding site" evidence="1">
    <location>
        <position position="97"/>
    </location>
    <ligand>
        <name>substrate</name>
    </ligand>
</feature>
<feature type="binding site" evidence="1">
    <location>
        <position position="107"/>
    </location>
    <ligand>
        <name>substrate</name>
    </ligand>
</feature>
<feature type="binding site" evidence="1">
    <location>
        <position position="135"/>
    </location>
    <ligand>
        <name>substrate</name>
    </ligand>
</feature>
<feature type="binding site" evidence="1">
    <location>
        <position position="224"/>
    </location>
    <ligand>
        <name>Mg(2+)</name>
        <dbReference type="ChEBI" id="CHEBI:18420"/>
    </ligand>
</feature>
<feature type="binding site" evidence="1">
    <location>
        <position position="224"/>
    </location>
    <ligand>
        <name>substrate</name>
    </ligand>
</feature>
<feature type="binding site" evidence="1">
    <location>
        <position position="248"/>
    </location>
    <ligand>
        <name>Mg(2+)</name>
        <dbReference type="ChEBI" id="CHEBI:18420"/>
    </ligand>
</feature>
<feature type="binding site" evidence="1">
    <location>
        <position position="252"/>
    </location>
    <ligand>
        <name>Mg(2+)</name>
        <dbReference type="ChEBI" id="CHEBI:18420"/>
    </ligand>
</feature>
<feature type="binding site" evidence="1">
    <location>
        <begin position="282"/>
        <end position="294"/>
    </location>
    <ligand>
        <name>NAD(+)</name>
        <dbReference type="ChEBI" id="CHEBI:57540"/>
    </ligand>
</feature>
<feature type="site" description="Important for catalysis" evidence="1">
    <location>
        <position position="142"/>
    </location>
</feature>
<feature type="site" description="Important for catalysis" evidence="1">
    <location>
        <position position="192"/>
    </location>
</feature>
<proteinExistence type="inferred from homology"/>
<reference key="1">
    <citation type="journal article" date="2007" name="PLoS Genet.">
        <title>Patterns and implications of gene gain and loss in the evolution of Prochlorococcus.</title>
        <authorList>
            <person name="Kettler G.C."/>
            <person name="Martiny A.C."/>
            <person name="Huang K."/>
            <person name="Zucker J."/>
            <person name="Coleman M.L."/>
            <person name="Rodrigue S."/>
            <person name="Chen F."/>
            <person name="Lapidus A."/>
            <person name="Ferriera S."/>
            <person name="Johnson J."/>
            <person name="Steglich C."/>
            <person name="Church G.M."/>
            <person name="Richardson P."/>
            <person name="Chisholm S.W."/>
        </authorList>
    </citation>
    <scope>NUCLEOTIDE SEQUENCE [LARGE SCALE GENOMIC DNA]</scope>
    <source>
        <strain>NATL2A</strain>
    </source>
</reference>
<accession>Q46LE2</accession>
<sequence>MKSYKITLLPGDGIGPEITNVTHKILDLVSRKFGFEIKFKEMPFGGSAIDSDGIPFPDRTLQECKNSDAVLLAAIGDPKYDELPREKRPETGLLNLRSSLDLFANIRPVKIIPSLTKASSLKEDFVKEVDLVVVRELTSGIYFGEPKGRIKTDKGERAFNTMTYTSEEVNRIAEIAFKLAKQRNQKVCSVDKANVLDVSQLWREETILVSNKYKDIELTHQYVDNAAMQLVRNPSQFDVILTGNLFGDILSDIAAMLTGSIGMLPSASLTTDGPGVFEPVHGSAPDIAGKDIANPIAMLLSAAMMLKIALNETEAATFLENAINEILNDGYRTSDLMSIQTTKQVGCSQMGELLAEKLK</sequence>
<comment type="function">
    <text evidence="1">Catalyzes the oxidation of 3-carboxy-2-hydroxy-4-methylpentanoate (3-isopropylmalate) to 3-carboxy-4-methyl-2-oxopentanoate. The product decarboxylates to 4-methyl-2 oxopentanoate.</text>
</comment>
<comment type="catalytic activity">
    <reaction evidence="1">
        <text>(2R,3S)-3-isopropylmalate + NAD(+) = 4-methyl-2-oxopentanoate + CO2 + NADH</text>
        <dbReference type="Rhea" id="RHEA:32271"/>
        <dbReference type="ChEBI" id="CHEBI:16526"/>
        <dbReference type="ChEBI" id="CHEBI:17865"/>
        <dbReference type="ChEBI" id="CHEBI:35121"/>
        <dbReference type="ChEBI" id="CHEBI:57540"/>
        <dbReference type="ChEBI" id="CHEBI:57945"/>
        <dbReference type="EC" id="1.1.1.85"/>
    </reaction>
</comment>
<comment type="cofactor">
    <cofactor evidence="1">
        <name>Mg(2+)</name>
        <dbReference type="ChEBI" id="CHEBI:18420"/>
    </cofactor>
    <cofactor evidence="1">
        <name>Mn(2+)</name>
        <dbReference type="ChEBI" id="CHEBI:29035"/>
    </cofactor>
    <text evidence="1">Binds 1 Mg(2+) or Mn(2+) ion per subunit.</text>
</comment>
<comment type="pathway">
    <text evidence="1">Amino-acid biosynthesis; L-leucine biosynthesis; L-leucine from 3-methyl-2-oxobutanoate: step 3/4.</text>
</comment>
<comment type="subunit">
    <text evidence="1">Homodimer.</text>
</comment>
<comment type="subcellular location">
    <subcellularLocation>
        <location evidence="1">Cytoplasm</location>
    </subcellularLocation>
</comment>
<comment type="similarity">
    <text evidence="1">Belongs to the isocitrate and isopropylmalate dehydrogenases family. LeuB type 1 subfamily.</text>
</comment>
<protein>
    <recommendedName>
        <fullName evidence="1">3-isopropylmalate dehydrogenase</fullName>
        <ecNumber evidence="1">1.1.1.85</ecNumber>
    </recommendedName>
    <alternativeName>
        <fullName evidence="1">3-IPM-DH</fullName>
    </alternativeName>
    <alternativeName>
        <fullName evidence="1">Beta-IPM dehydrogenase</fullName>
        <shortName evidence="1">IMDH</shortName>
    </alternativeName>
</protein>
<gene>
    <name evidence="1" type="primary">leuB</name>
    <name type="ordered locus">PMN2A_0194</name>
</gene>
<dbReference type="EC" id="1.1.1.85" evidence="1"/>
<dbReference type="EMBL" id="CP000095">
    <property type="protein sequence ID" value="AAZ57686.1"/>
    <property type="molecule type" value="Genomic_DNA"/>
</dbReference>
<dbReference type="RefSeq" id="WP_011293728.1">
    <property type="nucleotide sequence ID" value="NC_007335.2"/>
</dbReference>
<dbReference type="SMR" id="Q46LE2"/>
<dbReference type="STRING" id="59920.PMN2A_0194"/>
<dbReference type="KEGG" id="pmn:PMN2A_0194"/>
<dbReference type="HOGENOM" id="CLU_031953_0_3_3"/>
<dbReference type="OrthoDB" id="9806254at2"/>
<dbReference type="PhylomeDB" id="Q46LE2"/>
<dbReference type="UniPathway" id="UPA00048">
    <property type="reaction ID" value="UER00072"/>
</dbReference>
<dbReference type="Proteomes" id="UP000002535">
    <property type="component" value="Chromosome"/>
</dbReference>
<dbReference type="GO" id="GO:0005829">
    <property type="term" value="C:cytosol"/>
    <property type="evidence" value="ECO:0007669"/>
    <property type="project" value="TreeGrafter"/>
</dbReference>
<dbReference type="GO" id="GO:0003862">
    <property type="term" value="F:3-isopropylmalate dehydrogenase activity"/>
    <property type="evidence" value="ECO:0007669"/>
    <property type="project" value="UniProtKB-UniRule"/>
</dbReference>
<dbReference type="GO" id="GO:0000287">
    <property type="term" value="F:magnesium ion binding"/>
    <property type="evidence" value="ECO:0007669"/>
    <property type="project" value="InterPro"/>
</dbReference>
<dbReference type="GO" id="GO:0051287">
    <property type="term" value="F:NAD binding"/>
    <property type="evidence" value="ECO:0007669"/>
    <property type="project" value="InterPro"/>
</dbReference>
<dbReference type="GO" id="GO:0009098">
    <property type="term" value="P:L-leucine biosynthetic process"/>
    <property type="evidence" value="ECO:0007669"/>
    <property type="project" value="UniProtKB-UniRule"/>
</dbReference>
<dbReference type="FunFam" id="3.40.718.10:FF:000028">
    <property type="entry name" value="3-isopropylmalate dehydrogenase"/>
    <property type="match status" value="1"/>
</dbReference>
<dbReference type="Gene3D" id="3.40.718.10">
    <property type="entry name" value="Isopropylmalate Dehydrogenase"/>
    <property type="match status" value="1"/>
</dbReference>
<dbReference type="HAMAP" id="MF_01033">
    <property type="entry name" value="LeuB_type1"/>
    <property type="match status" value="1"/>
</dbReference>
<dbReference type="InterPro" id="IPR019818">
    <property type="entry name" value="IsoCit/isopropylmalate_DH_CS"/>
</dbReference>
<dbReference type="InterPro" id="IPR024084">
    <property type="entry name" value="IsoPropMal-DH-like_dom"/>
</dbReference>
<dbReference type="InterPro" id="IPR004429">
    <property type="entry name" value="Isopropylmalate_DH"/>
</dbReference>
<dbReference type="NCBIfam" id="TIGR00169">
    <property type="entry name" value="leuB"/>
    <property type="match status" value="1"/>
</dbReference>
<dbReference type="PANTHER" id="PTHR42979">
    <property type="entry name" value="3-ISOPROPYLMALATE DEHYDROGENASE"/>
    <property type="match status" value="1"/>
</dbReference>
<dbReference type="PANTHER" id="PTHR42979:SF1">
    <property type="entry name" value="3-ISOPROPYLMALATE DEHYDROGENASE"/>
    <property type="match status" value="1"/>
</dbReference>
<dbReference type="Pfam" id="PF00180">
    <property type="entry name" value="Iso_dh"/>
    <property type="match status" value="1"/>
</dbReference>
<dbReference type="SMART" id="SM01329">
    <property type="entry name" value="Iso_dh"/>
    <property type="match status" value="1"/>
</dbReference>
<dbReference type="SUPFAM" id="SSF53659">
    <property type="entry name" value="Isocitrate/Isopropylmalate dehydrogenase-like"/>
    <property type="match status" value="1"/>
</dbReference>
<dbReference type="PROSITE" id="PS00470">
    <property type="entry name" value="IDH_IMDH"/>
    <property type="match status" value="1"/>
</dbReference>
<keyword id="KW-0028">Amino-acid biosynthesis</keyword>
<keyword id="KW-0100">Branched-chain amino acid biosynthesis</keyword>
<keyword id="KW-0963">Cytoplasm</keyword>
<keyword id="KW-0432">Leucine biosynthesis</keyword>
<keyword id="KW-0460">Magnesium</keyword>
<keyword id="KW-0464">Manganese</keyword>
<keyword id="KW-0479">Metal-binding</keyword>
<keyword id="KW-0520">NAD</keyword>
<keyword id="KW-0560">Oxidoreductase</keyword>
<keyword id="KW-1185">Reference proteome</keyword>
<organism>
    <name type="scientific">Prochlorococcus marinus (strain NATL2A)</name>
    <dbReference type="NCBI Taxonomy" id="59920"/>
    <lineage>
        <taxon>Bacteria</taxon>
        <taxon>Bacillati</taxon>
        <taxon>Cyanobacteriota</taxon>
        <taxon>Cyanophyceae</taxon>
        <taxon>Synechococcales</taxon>
        <taxon>Prochlorococcaceae</taxon>
        <taxon>Prochlorococcus</taxon>
    </lineage>
</organism>